<gene>
    <name type="ordered locus">M6_Spy1787</name>
</gene>
<proteinExistence type="inferred from homology"/>
<feature type="chain" id="PRO_0000204013" description="UPF0246 protein M6_Spy1787">
    <location>
        <begin position="1"/>
        <end position="243"/>
    </location>
</feature>
<evidence type="ECO:0000255" key="1">
    <source>
        <dbReference type="HAMAP-Rule" id="MF_00652"/>
    </source>
</evidence>
<sequence>MLTFLIPTAKEMTTPKESHPHLLPQDSQAILKIMTAMTTEDLAKSYRIKEEAAKKEQQRWQDMASQQSLAYPAYQLFNGLMYRHIKRDKLTTQEQAYITQQVYITSSFYGIIPANHPIAEHRHDFHTRIKIEGQSLKSYWRPCYNQFAKEHPQVISLLSSEFDDVFSKDCKQLWISPKFMAEKEGQFKTHSTISKKARGAFLTACMENNCQTVDSLKSLVFAGFYYHPDLSTDYEFVYIKKEA</sequence>
<accession>Q5X9J1</accession>
<organism>
    <name type="scientific">Streptococcus pyogenes serotype M6 (strain ATCC BAA-946 / MGAS10394)</name>
    <dbReference type="NCBI Taxonomy" id="286636"/>
    <lineage>
        <taxon>Bacteria</taxon>
        <taxon>Bacillati</taxon>
        <taxon>Bacillota</taxon>
        <taxon>Bacilli</taxon>
        <taxon>Lactobacillales</taxon>
        <taxon>Streptococcaceae</taxon>
        <taxon>Streptococcus</taxon>
    </lineage>
</organism>
<name>Y1787_STRP6</name>
<protein>
    <recommendedName>
        <fullName evidence="1">UPF0246 protein M6_Spy1787</fullName>
    </recommendedName>
</protein>
<reference key="1">
    <citation type="journal article" date="2004" name="J. Infect. Dis.">
        <title>Progress toward characterization of the group A Streptococcus metagenome: complete genome sequence of a macrolide-resistant serotype M6 strain.</title>
        <authorList>
            <person name="Banks D.J."/>
            <person name="Porcella S.F."/>
            <person name="Barbian K.D."/>
            <person name="Beres S.B."/>
            <person name="Philips L.E."/>
            <person name="Voyich J.M."/>
            <person name="DeLeo F.R."/>
            <person name="Martin J.M."/>
            <person name="Somerville G.A."/>
            <person name="Musser J.M."/>
        </authorList>
    </citation>
    <scope>NUCLEOTIDE SEQUENCE [LARGE SCALE GENOMIC DNA]</scope>
    <source>
        <strain>ATCC BAA-946 / MGAS10394</strain>
    </source>
</reference>
<comment type="similarity">
    <text evidence="1">Belongs to the UPF0246 family.</text>
</comment>
<dbReference type="EMBL" id="CP000003">
    <property type="protein sequence ID" value="AAT87922.1"/>
    <property type="molecule type" value="Genomic_DNA"/>
</dbReference>
<dbReference type="RefSeq" id="WP_011185056.1">
    <property type="nucleotide sequence ID" value="NC_006086.1"/>
</dbReference>
<dbReference type="SMR" id="Q5X9J1"/>
<dbReference type="KEGG" id="spa:M6_Spy1787"/>
<dbReference type="HOGENOM" id="CLU_061989_2_1_9"/>
<dbReference type="Proteomes" id="UP000001167">
    <property type="component" value="Chromosome"/>
</dbReference>
<dbReference type="GO" id="GO:0005829">
    <property type="term" value="C:cytosol"/>
    <property type="evidence" value="ECO:0007669"/>
    <property type="project" value="TreeGrafter"/>
</dbReference>
<dbReference type="GO" id="GO:0033194">
    <property type="term" value="P:response to hydroperoxide"/>
    <property type="evidence" value="ECO:0007669"/>
    <property type="project" value="TreeGrafter"/>
</dbReference>
<dbReference type="HAMAP" id="MF_00652">
    <property type="entry name" value="UPF0246"/>
    <property type="match status" value="1"/>
</dbReference>
<dbReference type="InterPro" id="IPR005583">
    <property type="entry name" value="YaaA"/>
</dbReference>
<dbReference type="NCBIfam" id="NF002543">
    <property type="entry name" value="PRK02101.1-4"/>
    <property type="match status" value="1"/>
</dbReference>
<dbReference type="PANTHER" id="PTHR30283:SF4">
    <property type="entry name" value="PEROXIDE STRESS RESISTANCE PROTEIN YAAA"/>
    <property type="match status" value="1"/>
</dbReference>
<dbReference type="PANTHER" id="PTHR30283">
    <property type="entry name" value="PEROXIDE STRESS RESPONSE PROTEIN YAAA"/>
    <property type="match status" value="1"/>
</dbReference>
<dbReference type="Pfam" id="PF03883">
    <property type="entry name" value="H2O2_YaaD"/>
    <property type="match status" value="1"/>
</dbReference>